<protein>
    <recommendedName>
        <fullName evidence="1">RNA-free ribonuclease P</fullName>
        <shortName evidence="1 3">RNA-free RNase P</shortName>
        <ecNumber evidence="1 2">3.1.26.5</ecNumber>
    </recommendedName>
    <alternativeName>
        <fullName evidence="1 3">Protein-only RNase P</fullName>
    </alternativeName>
</protein>
<gene>
    <name type="ordered locus">MM_2077</name>
</gene>
<feature type="chain" id="PRO_0000136081" description="RNA-free ribonuclease P">
    <location>
        <begin position="1"/>
        <end position="247"/>
    </location>
</feature>
<name>RFRNP_METMA</name>
<comment type="function">
    <text evidence="1 2">RNA-free RNase P that catalyzes the removal of the 5'-leader sequence from pre-tRNA to produce the mature 5'-terminus.</text>
</comment>
<comment type="catalytic activity">
    <reaction evidence="1 2">
        <text>Endonucleolytic cleavage of RNA, removing 5'-extranucleotides from tRNA precursor.</text>
        <dbReference type="EC" id="3.1.26.5"/>
    </reaction>
</comment>
<comment type="disruption phenotype">
    <text evidence="2">Deletion mutant shows no growth phenotype under standard conditions or nitrogen deficiency.</text>
</comment>
<comment type="miscellaneous">
    <text evidence="4">The ease to obtain knockout of this gene and the lack of growth phenotypes upon gene deletion suggests that archaeal HARPs do not make a major contribution to global tRNA 5'-end maturation in archaea, but may well exert a specialised, yet unknown function in (t)RNA metabolism.</text>
</comment>
<comment type="similarity">
    <text evidence="1">Belongs to the HARP family.</text>
</comment>
<dbReference type="EC" id="3.1.26.5" evidence="1 2"/>
<dbReference type="EMBL" id="AE008384">
    <property type="protein sequence ID" value="AAM31773.1"/>
    <property type="molecule type" value="Genomic_DNA"/>
</dbReference>
<dbReference type="RefSeq" id="WP_011034009.1">
    <property type="nucleotide sequence ID" value="NC_003901.1"/>
</dbReference>
<dbReference type="SMR" id="Q8PV94"/>
<dbReference type="KEGG" id="mma:MM_2077"/>
<dbReference type="PATRIC" id="fig|192952.21.peg.2384"/>
<dbReference type="eggNOG" id="arCOG00720">
    <property type="taxonomic scope" value="Archaea"/>
</dbReference>
<dbReference type="HOGENOM" id="CLU_109672_0_0_2"/>
<dbReference type="Proteomes" id="UP000000595">
    <property type="component" value="Chromosome"/>
</dbReference>
<dbReference type="GO" id="GO:0004526">
    <property type="term" value="F:ribonuclease P activity"/>
    <property type="evidence" value="ECO:0007669"/>
    <property type="project" value="UniProtKB-UniRule"/>
</dbReference>
<dbReference type="GO" id="GO:0001682">
    <property type="term" value="P:tRNA 5'-leader removal"/>
    <property type="evidence" value="ECO:0007669"/>
    <property type="project" value="UniProtKB-UniRule"/>
</dbReference>
<dbReference type="CDD" id="cd18691">
    <property type="entry name" value="PIN_VapC-like"/>
    <property type="match status" value="1"/>
</dbReference>
<dbReference type="HAMAP" id="MF_01078">
    <property type="entry name" value="RNA_free_RNase_P"/>
    <property type="match status" value="1"/>
</dbReference>
<dbReference type="InterPro" id="IPR014856">
    <property type="entry name" value="RNA_free_RNase_P"/>
</dbReference>
<dbReference type="NCBIfam" id="NF003343">
    <property type="entry name" value="PRK04358.1-4"/>
    <property type="match status" value="1"/>
</dbReference>
<dbReference type="NCBIfam" id="TIGR03875">
    <property type="entry name" value="RNA_lig_partner"/>
    <property type="match status" value="1"/>
</dbReference>
<dbReference type="PANTHER" id="PTHR41173:SF1">
    <property type="entry name" value="RNA-FREE RIBONUCLEASE P"/>
    <property type="match status" value="1"/>
</dbReference>
<dbReference type="PANTHER" id="PTHR41173">
    <property type="entry name" value="UPF0278 PROTEIN TK1425"/>
    <property type="match status" value="1"/>
</dbReference>
<dbReference type="Pfam" id="PF08745">
    <property type="entry name" value="PIN_5"/>
    <property type="match status" value="1"/>
</dbReference>
<reference key="1">
    <citation type="journal article" date="2002" name="J. Mol. Microbiol. Biotechnol.">
        <title>The genome of Methanosarcina mazei: evidence for lateral gene transfer between Bacteria and Archaea.</title>
        <authorList>
            <person name="Deppenmeier U."/>
            <person name="Johann A."/>
            <person name="Hartsch T."/>
            <person name="Merkl R."/>
            <person name="Schmitz R.A."/>
            <person name="Martinez-Arias R."/>
            <person name="Henne A."/>
            <person name="Wiezer A."/>
            <person name="Baeumer S."/>
            <person name="Jacobi C."/>
            <person name="Brueggemann H."/>
            <person name="Lienard T."/>
            <person name="Christmann A."/>
            <person name="Boemecke M."/>
            <person name="Steckel S."/>
            <person name="Bhattacharyya A."/>
            <person name="Lykidis A."/>
            <person name="Overbeek R."/>
            <person name="Klenk H.-P."/>
            <person name="Gunsalus R.P."/>
            <person name="Fritz H.-J."/>
            <person name="Gottschalk G."/>
        </authorList>
    </citation>
    <scope>NUCLEOTIDE SEQUENCE [LARGE SCALE GENOMIC DNA]</scope>
    <source>
        <strain>ATCC BAA-159 / DSM 3647 / Goe1 / Go1 / JCM 11833 / OCM 88</strain>
    </source>
</reference>
<reference key="2">
    <citation type="journal article" date="2019" name="IUBMB Life">
        <title>Homologs of aquifex aeolicus protein-only RNase P are not the major RNase P activities in the archaea haloferax volcanii and methanosarcina mazei.</title>
        <authorList>
            <person name="Schwarz T.S."/>
            <person name="Waeber N.B."/>
            <person name="Feyh R."/>
            <person name="Weidenbach K."/>
            <person name="Schmitz R.A."/>
            <person name="Marchfelder A."/>
            <person name="Hartmann R.K."/>
        </authorList>
    </citation>
    <scope>FUNCTION</scope>
    <scope>CATALYTIC ACTIVITY</scope>
    <scope>DISRUPTION PHENOTYPE</scope>
    <source>
        <strain>ATCC BAA-159 / DSM 3647 / Goe1 / Go1 / JCM 11833 / OCM 88</strain>
    </source>
</reference>
<evidence type="ECO:0000255" key="1">
    <source>
        <dbReference type="HAMAP-Rule" id="MF_01078"/>
    </source>
</evidence>
<evidence type="ECO:0000269" key="2">
    <source>
    </source>
</evidence>
<evidence type="ECO:0000303" key="3">
    <source>
    </source>
</evidence>
<evidence type="ECO:0000305" key="4">
    <source>
    </source>
</evidence>
<accession>Q8PV94</accession>
<sequence>MLKQRFVLDTTALTDLQTREVMGYTSLCEGMKTILDLIAEARLHFGISCYVPYPSVYKEMYEFASRNGCDREVVAKIDTWLVKKSPDRYRVDVTSQIFHEYVSYMRERINRGMGVAEDAIWEAATECLFMENPQNKKKEYREEVEREVIGGIIGKFRNKYRAALRYGILDSAPDIDVLILAKELDAAVIASDYGIEKWAEQLGVRFVPANTFPMMIKEYLRHGPEVVKEQEDEDRKRIDYSDDADFI</sequence>
<organism>
    <name type="scientific">Methanosarcina mazei (strain ATCC BAA-159 / DSM 3647 / Goe1 / Go1 / JCM 11833 / OCM 88)</name>
    <name type="common">Methanosarcina frisia</name>
    <dbReference type="NCBI Taxonomy" id="192952"/>
    <lineage>
        <taxon>Archaea</taxon>
        <taxon>Methanobacteriati</taxon>
        <taxon>Methanobacteriota</taxon>
        <taxon>Stenosarchaea group</taxon>
        <taxon>Methanomicrobia</taxon>
        <taxon>Methanosarcinales</taxon>
        <taxon>Methanosarcinaceae</taxon>
        <taxon>Methanosarcina</taxon>
    </lineage>
</organism>
<keyword id="KW-0255">Endonuclease</keyword>
<keyword id="KW-0378">Hydrolase</keyword>
<keyword id="KW-0540">Nuclease</keyword>
<keyword id="KW-0819">tRNA processing</keyword>
<proteinExistence type="evidence at protein level"/>